<dbReference type="EC" id="2.1.1.181" evidence="1"/>
<dbReference type="EMBL" id="AE016795">
    <property type="protein sequence ID" value="AAO11116.1"/>
    <property type="molecule type" value="Genomic_DNA"/>
</dbReference>
<dbReference type="RefSeq" id="WP_011080610.1">
    <property type="nucleotide sequence ID" value="NC_004459.3"/>
</dbReference>
<dbReference type="SMR" id="Q8D935"/>
<dbReference type="KEGG" id="vvu:VV1_2774"/>
<dbReference type="HOGENOM" id="CLU_027534_3_0_6"/>
<dbReference type="Proteomes" id="UP000002275">
    <property type="component" value="Chromosome 1"/>
</dbReference>
<dbReference type="GO" id="GO:0005737">
    <property type="term" value="C:cytoplasm"/>
    <property type="evidence" value="ECO:0007669"/>
    <property type="project" value="UniProtKB-SubCell"/>
</dbReference>
<dbReference type="GO" id="GO:0052907">
    <property type="term" value="F:23S rRNA (adenine(1618)-N(6))-methyltransferase activity"/>
    <property type="evidence" value="ECO:0007669"/>
    <property type="project" value="UniProtKB-EC"/>
</dbReference>
<dbReference type="GO" id="GO:0070475">
    <property type="term" value="P:rRNA base methylation"/>
    <property type="evidence" value="ECO:0007669"/>
    <property type="project" value="TreeGrafter"/>
</dbReference>
<dbReference type="Gene3D" id="3.40.50.150">
    <property type="entry name" value="Vaccinia Virus protein VP39"/>
    <property type="match status" value="1"/>
</dbReference>
<dbReference type="HAMAP" id="MF_01848">
    <property type="entry name" value="23SrRNA_methyltr_F"/>
    <property type="match status" value="1"/>
</dbReference>
<dbReference type="InterPro" id="IPR010286">
    <property type="entry name" value="METTL16/RlmF"/>
</dbReference>
<dbReference type="InterPro" id="IPR016909">
    <property type="entry name" value="rRNA_lsu_MeTfrase_F"/>
</dbReference>
<dbReference type="InterPro" id="IPR029063">
    <property type="entry name" value="SAM-dependent_MTases_sf"/>
</dbReference>
<dbReference type="NCBIfam" id="NF008725">
    <property type="entry name" value="PRK11727.1"/>
    <property type="match status" value="1"/>
</dbReference>
<dbReference type="PANTHER" id="PTHR13393:SF0">
    <property type="entry name" value="RNA N6-ADENOSINE-METHYLTRANSFERASE METTL16"/>
    <property type="match status" value="1"/>
</dbReference>
<dbReference type="PANTHER" id="PTHR13393">
    <property type="entry name" value="SAM-DEPENDENT METHYLTRANSFERASE"/>
    <property type="match status" value="1"/>
</dbReference>
<dbReference type="Pfam" id="PF05971">
    <property type="entry name" value="Methyltransf_10"/>
    <property type="match status" value="1"/>
</dbReference>
<dbReference type="PIRSF" id="PIRSF029038">
    <property type="entry name" value="Mtase_YbiN_prd"/>
    <property type="match status" value="1"/>
</dbReference>
<dbReference type="SUPFAM" id="SSF53335">
    <property type="entry name" value="S-adenosyl-L-methionine-dependent methyltransferases"/>
    <property type="match status" value="1"/>
</dbReference>
<name>RLMF_VIBVU</name>
<sequence>MTNKRKSAKPLEPAKRAPKPRTKKSRDLSASESNCDFVKVTRAGLHSRNKHQGRYDFAKLTQALPSLAPFVIKNPKGEASISFSDSTAVKMLNKALLSAYYQVANWDIPAGYLCPPIPGRADYIHRLAELLEGEVKGKFPHEKVQALDIGVGANAIYPIIAICDYRWRYTGSDVDPKSIESAQRIADSNPVLQGQLELKLQDQSQHIFQGIIGPTDYFHVTTCNPPFHASAQEAAFGTQRKLDNLAANRLKKGVTAKAGSQKISKNKPILNFGGQNSELWCQGGESSFLKRMANESERFAHQVLWFSTLVSKKDNVRPLRKQLEKLGVRSIRVVEMSQGQKVSRFVAWSFMDKQQRGEWIKLRG</sequence>
<feature type="chain" id="PRO_0000349978" description="Ribosomal RNA large subunit methyltransferase F">
    <location>
        <begin position="1"/>
        <end position="364"/>
    </location>
</feature>
<feature type="region of interest" description="Disordered" evidence="2">
    <location>
        <begin position="1"/>
        <end position="30"/>
    </location>
</feature>
<evidence type="ECO:0000255" key="1">
    <source>
        <dbReference type="HAMAP-Rule" id="MF_01848"/>
    </source>
</evidence>
<evidence type="ECO:0000256" key="2">
    <source>
        <dbReference type="SAM" id="MobiDB-lite"/>
    </source>
</evidence>
<reference key="1">
    <citation type="submission" date="2002-12" db="EMBL/GenBank/DDBJ databases">
        <title>Complete genome sequence of Vibrio vulnificus CMCP6.</title>
        <authorList>
            <person name="Rhee J.H."/>
            <person name="Kim S.Y."/>
            <person name="Chung S.S."/>
            <person name="Kim J.J."/>
            <person name="Moon Y.H."/>
            <person name="Jeong H."/>
            <person name="Choy H.E."/>
        </authorList>
    </citation>
    <scope>NUCLEOTIDE SEQUENCE [LARGE SCALE GENOMIC DNA]</scope>
    <source>
        <strain>CMCP6</strain>
    </source>
</reference>
<keyword id="KW-0963">Cytoplasm</keyword>
<keyword id="KW-0489">Methyltransferase</keyword>
<keyword id="KW-0698">rRNA processing</keyword>
<keyword id="KW-0949">S-adenosyl-L-methionine</keyword>
<keyword id="KW-0808">Transferase</keyword>
<accession>Q8D935</accession>
<proteinExistence type="inferred from homology"/>
<protein>
    <recommendedName>
        <fullName evidence="1">Ribosomal RNA large subunit methyltransferase F</fullName>
        <ecNumber evidence="1">2.1.1.181</ecNumber>
    </recommendedName>
    <alternativeName>
        <fullName evidence="1">23S rRNA mA1618 methyltransferase</fullName>
    </alternativeName>
    <alternativeName>
        <fullName evidence="1">rRNA adenine N-6-methyltransferase</fullName>
    </alternativeName>
</protein>
<comment type="function">
    <text evidence="1">Specifically methylates the adenine in position 1618 of 23S rRNA.</text>
</comment>
<comment type="catalytic activity">
    <reaction evidence="1">
        <text>adenosine(1618) in 23S rRNA + S-adenosyl-L-methionine = N(6)-methyladenosine(1618) in 23S rRNA + S-adenosyl-L-homocysteine + H(+)</text>
        <dbReference type="Rhea" id="RHEA:16497"/>
        <dbReference type="Rhea" id="RHEA-COMP:10229"/>
        <dbReference type="Rhea" id="RHEA-COMP:10231"/>
        <dbReference type="ChEBI" id="CHEBI:15378"/>
        <dbReference type="ChEBI" id="CHEBI:57856"/>
        <dbReference type="ChEBI" id="CHEBI:59789"/>
        <dbReference type="ChEBI" id="CHEBI:74411"/>
        <dbReference type="ChEBI" id="CHEBI:74449"/>
        <dbReference type="EC" id="2.1.1.181"/>
    </reaction>
</comment>
<comment type="subcellular location">
    <subcellularLocation>
        <location evidence="1">Cytoplasm</location>
    </subcellularLocation>
</comment>
<comment type="similarity">
    <text evidence="1">Belongs to the methyltransferase superfamily. METTL16/RlmF family.</text>
</comment>
<gene>
    <name evidence="1" type="primary">rlmF</name>
    <name type="ordered locus">VV1_2774</name>
</gene>
<organism>
    <name type="scientific">Vibrio vulnificus (strain CMCP6)</name>
    <dbReference type="NCBI Taxonomy" id="216895"/>
    <lineage>
        <taxon>Bacteria</taxon>
        <taxon>Pseudomonadati</taxon>
        <taxon>Pseudomonadota</taxon>
        <taxon>Gammaproteobacteria</taxon>
        <taxon>Vibrionales</taxon>
        <taxon>Vibrionaceae</taxon>
        <taxon>Vibrio</taxon>
    </lineage>
</organism>